<accession>P02675</accession>
<accession>A0JLR9</accession>
<accession>B2R7G3</accession>
<accession>Q32Q65</accession>
<accession>Q3KPF2</accession>
<keyword id="KW-0002">3D-structure</keyword>
<keyword id="KW-1064">Adaptive immunity</keyword>
<keyword id="KW-0094">Blood coagulation</keyword>
<keyword id="KW-0175">Coiled coil</keyword>
<keyword id="KW-0903">Direct protein sequencing</keyword>
<keyword id="KW-0225">Disease variant</keyword>
<keyword id="KW-1015">Disulfide bond</keyword>
<keyword id="KW-0325">Glycoprotein</keyword>
<keyword id="KW-0356">Hemostasis</keyword>
<keyword id="KW-0391">Immunity</keyword>
<keyword id="KW-0399">Innate immunity</keyword>
<keyword id="KW-1267">Proteomics identification</keyword>
<keyword id="KW-0873">Pyrrolidone carboxylic acid</keyword>
<keyword id="KW-1185">Reference proteome</keyword>
<keyword id="KW-0964">Secreted</keyword>
<keyword id="KW-0732">Signal</keyword>
<evidence type="ECO:0000250" key="1">
    <source>
        <dbReference type="UniProtKB" id="E9PV24"/>
    </source>
</evidence>
<evidence type="ECO:0000255" key="2">
    <source>
        <dbReference type="PROSITE-ProRule" id="PRU00739"/>
    </source>
</evidence>
<evidence type="ECO:0000256" key="3">
    <source>
        <dbReference type="SAM" id="MobiDB-lite"/>
    </source>
</evidence>
<evidence type="ECO:0000269" key="4">
    <source>
    </source>
</evidence>
<evidence type="ECO:0000269" key="5">
    <source>
    </source>
</evidence>
<evidence type="ECO:0000269" key="6">
    <source>
    </source>
</evidence>
<evidence type="ECO:0000269" key="7">
    <source>
    </source>
</evidence>
<evidence type="ECO:0000269" key="8">
    <source>
    </source>
</evidence>
<evidence type="ECO:0000269" key="9">
    <source>
    </source>
</evidence>
<evidence type="ECO:0000269" key="10">
    <source>
    </source>
</evidence>
<evidence type="ECO:0000269" key="11">
    <source>
    </source>
</evidence>
<evidence type="ECO:0000269" key="12">
    <source>
    </source>
</evidence>
<evidence type="ECO:0000269" key="13">
    <source>
    </source>
</evidence>
<evidence type="ECO:0000269" key="14">
    <source>
    </source>
</evidence>
<evidence type="ECO:0000269" key="15">
    <source>
    </source>
</evidence>
<evidence type="ECO:0000269" key="16">
    <source>
    </source>
</evidence>
<evidence type="ECO:0000269" key="17">
    <source>
    </source>
</evidence>
<evidence type="ECO:0000269" key="18">
    <source>
    </source>
</evidence>
<evidence type="ECO:0000269" key="19">
    <source>
    </source>
</evidence>
<evidence type="ECO:0000269" key="20">
    <source>
    </source>
</evidence>
<evidence type="ECO:0000269" key="21">
    <source>
    </source>
</evidence>
<evidence type="ECO:0000269" key="22">
    <source>
    </source>
</evidence>
<evidence type="ECO:0000269" key="23">
    <source>
    </source>
</evidence>
<evidence type="ECO:0000269" key="24">
    <source>
    </source>
</evidence>
<evidence type="ECO:0000269" key="25">
    <source ref="11"/>
</evidence>
<evidence type="ECO:0000269" key="26">
    <source ref="13"/>
</evidence>
<evidence type="ECO:0000269" key="27">
    <source ref="4"/>
</evidence>
<evidence type="ECO:0000305" key="28"/>
<evidence type="ECO:0000305" key="29">
    <source>
    </source>
</evidence>
<evidence type="ECO:0000305" key="30">
    <source>
    </source>
</evidence>
<evidence type="ECO:0000305" key="31">
    <source>
    </source>
</evidence>
<evidence type="ECO:0000305" key="32">
    <source>
    </source>
</evidence>
<evidence type="ECO:0007744" key="33">
    <source>
        <dbReference type="PDB" id="1FZC"/>
    </source>
</evidence>
<evidence type="ECO:0007829" key="34">
    <source>
        <dbReference type="PDB" id="1FZA"/>
    </source>
</evidence>
<evidence type="ECO:0007829" key="35">
    <source>
        <dbReference type="PDB" id="1FZB"/>
    </source>
</evidence>
<evidence type="ECO:0007829" key="36">
    <source>
        <dbReference type="PDB" id="1FZC"/>
    </source>
</evidence>
<evidence type="ECO:0007829" key="37">
    <source>
        <dbReference type="PDB" id="1FZF"/>
    </source>
</evidence>
<evidence type="ECO:0007829" key="38">
    <source>
        <dbReference type="PDB" id="2H43"/>
    </source>
</evidence>
<evidence type="ECO:0007829" key="39">
    <source>
        <dbReference type="PDB" id="2HOD"/>
    </source>
</evidence>
<evidence type="ECO:0007829" key="40">
    <source>
        <dbReference type="PDB" id="2HPC"/>
    </source>
</evidence>
<evidence type="ECO:0007829" key="41">
    <source>
        <dbReference type="PDB" id="2OYH"/>
    </source>
</evidence>
<evidence type="ECO:0007829" key="42">
    <source>
        <dbReference type="PDB" id="2OYI"/>
    </source>
</evidence>
<evidence type="ECO:0007829" key="43">
    <source>
        <dbReference type="PDB" id="3BVH"/>
    </source>
</evidence>
<evidence type="ECO:0007829" key="44">
    <source>
        <dbReference type="PDB" id="3E1I"/>
    </source>
</evidence>
<evidence type="ECO:0007829" key="45">
    <source>
        <dbReference type="PDB" id="3GHG"/>
    </source>
</evidence>
<evidence type="ECO:0007829" key="46">
    <source>
        <dbReference type="PDB" id="3HUS"/>
    </source>
</evidence>
<proteinExistence type="evidence at protein level"/>
<organism>
    <name type="scientific">Homo sapiens</name>
    <name type="common">Human</name>
    <dbReference type="NCBI Taxonomy" id="9606"/>
    <lineage>
        <taxon>Eukaryota</taxon>
        <taxon>Metazoa</taxon>
        <taxon>Chordata</taxon>
        <taxon>Craniata</taxon>
        <taxon>Vertebrata</taxon>
        <taxon>Euteleostomi</taxon>
        <taxon>Mammalia</taxon>
        <taxon>Eutheria</taxon>
        <taxon>Euarchontoglires</taxon>
        <taxon>Primates</taxon>
        <taxon>Haplorrhini</taxon>
        <taxon>Catarrhini</taxon>
        <taxon>Hominidae</taxon>
        <taxon>Homo</taxon>
    </lineage>
</organism>
<gene>
    <name type="primary">FGB</name>
</gene>
<protein>
    <recommendedName>
        <fullName>Fibrinogen beta chain</fullName>
    </recommendedName>
    <component>
        <recommendedName>
            <fullName>Fibrinopeptide B</fullName>
        </recommendedName>
    </component>
    <component>
        <recommendedName>
            <fullName>Fibrinogen beta chain</fullName>
        </recommendedName>
    </component>
</protein>
<name>FIBB_HUMAN</name>
<dbReference type="EMBL" id="J00129">
    <property type="protein sequence ID" value="AAA52429.1"/>
    <property type="molecule type" value="mRNA"/>
</dbReference>
<dbReference type="EMBL" id="J00131">
    <property type="protein sequence ID" value="AAA98115.1"/>
    <property type="molecule type" value="Genomic_DNA"/>
</dbReference>
<dbReference type="EMBL" id="J00130">
    <property type="protein sequence ID" value="AAA98115.1"/>
    <property type="status" value="JOINED"/>
    <property type="molecule type" value="Genomic_DNA"/>
</dbReference>
<dbReference type="EMBL" id="J00132">
    <property type="protein sequence ID" value="AAA98116.1"/>
    <property type="molecule type" value="Genomic_DNA"/>
</dbReference>
<dbReference type="EMBL" id="J00133">
    <property type="status" value="NOT_ANNOTATED_CDS"/>
    <property type="molecule type" value="mRNA"/>
</dbReference>
<dbReference type="EMBL" id="M64983">
    <property type="protein sequence ID" value="AAA18024.2"/>
    <property type="molecule type" value="Genomic_DNA"/>
</dbReference>
<dbReference type="EMBL" id="AF388026">
    <property type="protein sequence ID" value="AAK62470.1"/>
    <property type="molecule type" value="Genomic_DNA"/>
</dbReference>
<dbReference type="EMBL" id="AK312972">
    <property type="protein sequence ID" value="BAG35810.1"/>
    <property type="molecule type" value="mRNA"/>
</dbReference>
<dbReference type="EMBL" id="CH471056">
    <property type="protein sequence ID" value="EAX04932.1"/>
    <property type="molecule type" value="Genomic_DNA"/>
</dbReference>
<dbReference type="EMBL" id="BC007030">
    <property type="protein sequence ID" value="AAH07030.1"/>
    <property type="status" value="ALT_SEQ"/>
    <property type="molecule type" value="mRNA"/>
</dbReference>
<dbReference type="EMBL" id="BC106760">
    <property type="protein sequence ID" value="AAI06761.1"/>
    <property type="molecule type" value="mRNA"/>
</dbReference>
<dbReference type="EMBL" id="BC107766">
    <property type="protein sequence ID" value="AAI07767.1"/>
    <property type="molecule type" value="mRNA"/>
</dbReference>
<dbReference type="EMBL" id="AH002694">
    <property type="protein sequence ID" value="AAA52445.1"/>
    <property type="molecule type" value="Genomic_DNA"/>
</dbReference>
<dbReference type="EMBL" id="X05018">
    <property type="protein sequence ID" value="CAA28674.1"/>
    <property type="molecule type" value="Genomic_DNA"/>
</dbReference>
<dbReference type="CCDS" id="CCDS3786.1"/>
<dbReference type="PIR" id="B43568">
    <property type="entry name" value="FGHUB"/>
</dbReference>
<dbReference type="RefSeq" id="NP_001171670.1">
    <property type="nucleotide sequence ID" value="NM_001184741.1"/>
</dbReference>
<dbReference type="RefSeq" id="NP_005132.2">
    <property type="nucleotide sequence ID" value="NM_005141.5"/>
</dbReference>
<dbReference type="PDB" id="1FZA">
    <property type="method" value="X-ray"/>
    <property type="resolution" value="2.90 A"/>
    <property type="chains" value="B/E=164-491"/>
</dbReference>
<dbReference type="PDB" id="1FZB">
    <property type="method" value="X-ray"/>
    <property type="resolution" value="2.90 A"/>
    <property type="chains" value="B/E=164-491"/>
</dbReference>
<dbReference type="PDB" id="1FZC">
    <property type="method" value="X-ray"/>
    <property type="resolution" value="2.30 A"/>
    <property type="chains" value="B/E=164-491"/>
</dbReference>
<dbReference type="PDB" id="1FZE">
    <property type="method" value="X-ray"/>
    <property type="resolution" value="3.00 A"/>
    <property type="chains" value="B/E=164-491"/>
</dbReference>
<dbReference type="PDB" id="1FZF">
    <property type="method" value="X-ray"/>
    <property type="resolution" value="2.70 A"/>
    <property type="chains" value="B/E=164-491, M/N/S/T=45-48"/>
</dbReference>
<dbReference type="PDB" id="1FZG">
    <property type="method" value="X-ray"/>
    <property type="resolution" value="2.50 A"/>
    <property type="chains" value="B/E=164-491"/>
</dbReference>
<dbReference type="PDB" id="1LT9">
    <property type="method" value="X-ray"/>
    <property type="resolution" value="2.80 A"/>
    <property type="chains" value="B/E=179-491"/>
</dbReference>
<dbReference type="PDB" id="1LTJ">
    <property type="method" value="X-ray"/>
    <property type="resolution" value="2.80 A"/>
    <property type="chains" value="B/E=179-491"/>
</dbReference>
<dbReference type="PDB" id="1N86">
    <property type="method" value="X-ray"/>
    <property type="resolution" value="3.20 A"/>
    <property type="chains" value="B/E=164-491, I/J=45-51"/>
</dbReference>
<dbReference type="PDB" id="1N8E">
    <property type="method" value="X-ray"/>
    <property type="resolution" value="4.50 A"/>
    <property type="chains" value="B/E=164-491"/>
</dbReference>
<dbReference type="PDB" id="1RE3">
    <property type="method" value="X-ray"/>
    <property type="resolution" value="2.45 A"/>
    <property type="chains" value="B/E=179-491"/>
</dbReference>
<dbReference type="PDB" id="1RE4">
    <property type="method" value="X-ray"/>
    <property type="resolution" value="2.70 A"/>
    <property type="chains" value="B/E=179-491"/>
</dbReference>
<dbReference type="PDB" id="1RF0">
    <property type="method" value="X-ray"/>
    <property type="resolution" value="2.81 A"/>
    <property type="chains" value="B/E=179-491"/>
</dbReference>
<dbReference type="PDB" id="1RF1">
    <property type="method" value="X-ray"/>
    <property type="resolution" value="2.53 A"/>
    <property type="chains" value="B/E=179-491"/>
</dbReference>
<dbReference type="PDB" id="2A45">
    <property type="method" value="X-ray"/>
    <property type="resolution" value="3.65 A"/>
    <property type="chains" value="H/K=45-135"/>
</dbReference>
<dbReference type="PDB" id="2FFD">
    <property type="method" value="X-ray"/>
    <property type="resolution" value="2.89 A"/>
    <property type="chains" value="B/E=179-491"/>
</dbReference>
<dbReference type="PDB" id="2H43">
    <property type="method" value="X-ray"/>
    <property type="resolution" value="2.70 A"/>
    <property type="chains" value="B/E=164-491"/>
</dbReference>
<dbReference type="PDB" id="2HLO">
    <property type="method" value="X-ray"/>
    <property type="resolution" value="2.60 A"/>
    <property type="chains" value="B/E=164-491"/>
</dbReference>
<dbReference type="PDB" id="2HOD">
    <property type="method" value="X-ray"/>
    <property type="resolution" value="2.90 A"/>
    <property type="chains" value="B/E/H/K=164-491"/>
</dbReference>
<dbReference type="PDB" id="2HPC">
    <property type="method" value="X-ray"/>
    <property type="resolution" value="2.90 A"/>
    <property type="chains" value="B/E/H/K=164-491"/>
</dbReference>
<dbReference type="PDB" id="2OYH">
    <property type="method" value="X-ray"/>
    <property type="resolution" value="2.40 A"/>
    <property type="chains" value="B/E=179-491"/>
</dbReference>
<dbReference type="PDB" id="2OYI">
    <property type="method" value="X-ray"/>
    <property type="resolution" value="2.70 A"/>
    <property type="chains" value="B/E=179-491"/>
</dbReference>
<dbReference type="PDB" id="2Q9I">
    <property type="method" value="X-ray"/>
    <property type="resolution" value="2.80 A"/>
    <property type="chains" value="B/E=164-491"/>
</dbReference>
<dbReference type="PDB" id="2XNX">
    <property type="method" value="X-ray"/>
    <property type="resolution" value="3.30 A"/>
    <property type="chains" value="B/E/H/K=164-491"/>
</dbReference>
<dbReference type="PDB" id="2XNY">
    <property type="method" value="X-ray"/>
    <property type="resolution" value="7.50 A"/>
    <property type="chains" value="B/E=164-491"/>
</dbReference>
<dbReference type="PDB" id="2Z4E">
    <property type="method" value="X-ray"/>
    <property type="resolution" value="2.70 A"/>
    <property type="chains" value="B/E=164-489"/>
</dbReference>
<dbReference type="PDB" id="3BVH">
    <property type="method" value="X-ray"/>
    <property type="resolution" value="2.60 A"/>
    <property type="chains" value="B/E=191-488"/>
</dbReference>
<dbReference type="PDB" id="3E1I">
    <property type="method" value="X-ray"/>
    <property type="resolution" value="2.30 A"/>
    <property type="chains" value="B/E=164-491"/>
</dbReference>
<dbReference type="PDB" id="3GHG">
    <property type="method" value="X-ray"/>
    <property type="resolution" value="2.90 A"/>
    <property type="chains" value="B/E/H/K=31-491"/>
</dbReference>
<dbReference type="PDB" id="3H32">
    <property type="method" value="X-ray"/>
    <property type="resolution" value="3.60 A"/>
    <property type="chains" value="B/E=31-488"/>
</dbReference>
<dbReference type="PDB" id="3HUS">
    <property type="method" value="X-ray"/>
    <property type="resolution" value="3.04 A"/>
    <property type="chains" value="B/E=179-491"/>
</dbReference>
<dbReference type="PDB" id="6ATZ">
    <property type="method" value="X-ray"/>
    <property type="resolution" value="2.70 A"/>
    <property type="chains" value="E/F=69-79"/>
</dbReference>
<dbReference type="PDB" id="6BIJ">
    <property type="method" value="X-ray"/>
    <property type="resolution" value="2.10 A"/>
    <property type="chains" value="C=69-81"/>
</dbReference>
<dbReference type="PDB" id="6BIL">
    <property type="method" value="X-ray"/>
    <property type="resolution" value="2.40 A"/>
    <property type="chains" value="C=69-81"/>
</dbReference>
<dbReference type="PDB" id="6V0Y">
    <property type="method" value="X-ray"/>
    <property type="resolution" value="2.70 A"/>
    <property type="chains" value="C=69-81"/>
</dbReference>
<dbReference type="PDB" id="6V13">
    <property type="method" value="X-ray"/>
    <property type="resolution" value="2.75 A"/>
    <property type="chains" value="C=69-81"/>
</dbReference>
<dbReference type="PDB" id="6V15">
    <property type="method" value="X-ray"/>
    <property type="resolution" value="2.80 A"/>
    <property type="chains" value="C=69-81"/>
</dbReference>
<dbReference type="PDB" id="6V18">
    <property type="method" value="X-ray"/>
    <property type="resolution" value="2.35 A"/>
    <property type="chains" value="C=69-81"/>
</dbReference>
<dbReference type="PDB" id="6V19">
    <property type="method" value="X-ray"/>
    <property type="resolution" value="2.60 A"/>
    <property type="chains" value="C=69-81"/>
</dbReference>
<dbReference type="PDB" id="6V1A">
    <property type="method" value="X-ray"/>
    <property type="resolution" value="2.29 A"/>
    <property type="chains" value="C=69-81"/>
</dbReference>
<dbReference type="PDBsum" id="1FZA"/>
<dbReference type="PDBsum" id="1FZB"/>
<dbReference type="PDBsum" id="1FZC"/>
<dbReference type="PDBsum" id="1FZE"/>
<dbReference type="PDBsum" id="1FZF"/>
<dbReference type="PDBsum" id="1FZG"/>
<dbReference type="PDBsum" id="1LT9"/>
<dbReference type="PDBsum" id="1LTJ"/>
<dbReference type="PDBsum" id="1N86"/>
<dbReference type="PDBsum" id="1N8E"/>
<dbReference type="PDBsum" id="1RE3"/>
<dbReference type="PDBsum" id="1RE4"/>
<dbReference type="PDBsum" id="1RF0"/>
<dbReference type="PDBsum" id="1RF1"/>
<dbReference type="PDBsum" id="2A45"/>
<dbReference type="PDBsum" id="2FFD"/>
<dbReference type="PDBsum" id="2H43"/>
<dbReference type="PDBsum" id="2HLO"/>
<dbReference type="PDBsum" id="2HOD"/>
<dbReference type="PDBsum" id="2HPC"/>
<dbReference type="PDBsum" id="2OYH"/>
<dbReference type="PDBsum" id="2OYI"/>
<dbReference type="PDBsum" id="2Q9I"/>
<dbReference type="PDBsum" id="2XNX"/>
<dbReference type="PDBsum" id="2XNY"/>
<dbReference type="PDBsum" id="2Z4E"/>
<dbReference type="PDBsum" id="3BVH"/>
<dbReference type="PDBsum" id="3E1I"/>
<dbReference type="PDBsum" id="3GHG"/>
<dbReference type="PDBsum" id="3H32"/>
<dbReference type="PDBsum" id="3HUS"/>
<dbReference type="PDBsum" id="6ATZ"/>
<dbReference type="PDBsum" id="6BIJ"/>
<dbReference type="PDBsum" id="6BIL"/>
<dbReference type="PDBsum" id="6V0Y"/>
<dbReference type="PDBsum" id="6V13"/>
<dbReference type="PDBsum" id="6V15"/>
<dbReference type="PDBsum" id="6V18"/>
<dbReference type="PDBsum" id="6V19"/>
<dbReference type="PDBsum" id="6V1A"/>
<dbReference type="SMR" id="P02675"/>
<dbReference type="BioGRID" id="108535">
    <property type="interactions" value="234"/>
</dbReference>
<dbReference type="ComplexPortal" id="CPX-1922">
    <property type="entry name" value="Fibrinogen complex"/>
</dbReference>
<dbReference type="ComplexPortal" id="CPX-6225">
    <property type="entry name" value="Fibrin complex"/>
</dbReference>
<dbReference type="CORUM" id="P02675"/>
<dbReference type="DIP" id="DIP-385N"/>
<dbReference type="FunCoup" id="P02675">
    <property type="interactions" value="400"/>
</dbReference>
<dbReference type="IntAct" id="P02675">
    <property type="interactions" value="165"/>
</dbReference>
<dbReference type="MINT" id="P02675"/>
<dbReference type="STRING" id="9606.ENSP00000306099"/>
<dbReference type="BindingDB" id="P02675"/>
<dbReference type="ChEMBL" id="CHEMBL2048"/>
<dbReference type="DrugBank" id="DB04919">
    <property type="generic name" value="Alfimeprase"/>
</dbReference>
<dbReference type="DrugBank" id="DB13151">
    <property type="generic name" value="Anti-inhibitor coagulant complex"/>
</dbReference>
<dbReference type="DrugBank" id="DB11571">
    <property type="generic name" value="Human thrombin"/>
</dbReference>
<dbReference type="DrugBank" id="DB11311">
    <property type="generic name" value="Prothrombin"/>
</dbReference>
<dbReference type="DrugBank" id="DB00364">
    <property type="generic name" value="Sucralfate"/>
</dbReference>
<dbReference type="DrugBank" id="DB11300">
    <property type="generic name" value="Thrombin"/>
</dbReference>
<dbReference type="DrugBank" id="DB11572">
    <property type="generic name" value="Thrombin alfa"/>
</dbReference>
<dbReference type="UniLectin" id="P02675"/>
<dbReference type="CarbonylDB" id="P02675"/>
<dbReference type="GlyConnect" id="157">
    <property type="glycosylation" value="4 N-Linked glycans"/>
</dbReference>
<dbReference type="GlyConnect" id="159">
    <property type="glycosylation" value="31 N-Linked glycans (1 site)"/>
</dbReference>
<dbReference type="GlyCosmos" id="P02675">
    <property type="glycosylation" value="3 sites, 33 glycans"/>
</dbReference>
<dbReference type="GlyGen" id="P02675">
    <property type="glycosylation" value="10 sites, 116 N-linked glycans (2 sites), 5 O-linked glycans (6 sites)"/>
</dbReference>
<dbReference type="iPTMnet" id="P02675"/>
<dbReference type="PhosphoSitePlus" id="P02675"/>
<dbReference type="SwissPalm" id="P02675"/>
<dbReference type="BioMuta" id="FGB"/>
<dbReference type="DMDM" id="399492"/>
<dbReference type="OGP" id="P02675"/>
<dbReference type="REPRODUCTION-2DPAGE" id="IPI00298497"/>
<dbReference type="REPRODUCTION-2DPAGE" id="P02675"/>
<dbReference type="CPTAC" id="non-CPTAC-1119"/>
<dbReference type="CPTAC" id="non-CPTAC-1120"/>
<dbReference type="CPTAC" id="non-CPTAC-2665"/>
<dbReference type="jPOST" id="P02675"/>
<dbReference type="MassIVE" id="P02675"/>
<dbReference type="PaxDb" id="9606-ENSP00000306099"/>
<dbReference type="PeptideAtlas" id="P02675"/>
<dbReference type="PRIDE" id="P02675"/>
<dbReference type="ProteomicsDB" id="51544"/>
<dbReference type="Pumba" id="P02675"/>
<dbReference type="ABCD" id="P02675">
    <property type="antibodies" value="8 sequenced antibodies"/>
</dbReference>
<dbReference type="Antibodypedia" id="855">
    <property type="antibodies" value="612 antibodies from 38 providers"/>
</dbReference>
<dbReference type="DNASU" id="2244"/>
<dbReference type="Ensembl" id="ENST00000302068.9">
    <property type="protein sequence ID" value="ENSP00000306099.4"/>
    <property type="gene ID" value="ENSG00000171564.12"/>
</dbReference>
<dbReference type="GeneID" id="2244"/>
<dbReference type="KEGG" id="hsa:2244"/>
<dbReference type="MANE-Select" id="ENST00000302068.9">
    <property type="protein sequence ID" value="ENSP00000306099.4"/>
    <property type="RefSeq nucleotide sequence ID" value="NM_005141.5"/>
    <property type="RefSeq protein sequence ID" value="NP_005132.2"/>
</dbReference>
<dbReference type="AGR" id="HGNC:3662"/>
<dbReference type="CTD" id="2244"/>
<dbReference type="DisGeNET" id="2244"/>
<dbReference type="GeneCards" id="FGB"/>
<dbReference type="HGNC" id="HGNC:3662">
    <property type="gene designation" value="FGB"/>
</dbReference>
<dbReference type="HPA" id="ENSG00000171564">
    <property type="expression patterns" value="Tissue enriched (liver)"/>
</dbReference>
<dbReference type="MalaCards" id="FGB"/>
<dbReference type="MIM" id="134830">
    <property type="type" value="gene"/>
</dbReference>
<dbReference type="MIM" id="202400">
    <property type="type" value="phenotype"/>
</dbReference>
<dbReference type="MIM" id="616004">
    <property type="type" value="phenotype"/>
</dbReference>
<dbReference type="neXtProt" id="NX_P02675"/>
<dbReference type="OpenTargets" id="ENSG00000171564"/>
<dbReference type="Orphanet" id="98880">
    <property type="disease" value="Familial afibrinogenemia"/>
</dbReference>
<dbReference type="Orphanet" id="98881">
    <property type="disease" value="Familial dysfibrinogenemia"/>
</dbReference>
<dbReference type="Orphanet" id="248408">
    <property type="disease" value="Familial hypodysfibrinogenemia"/>
</dbReference>
<dbReference type="Orphanet" id="101041">
    <property type="disease" value="Familial hypofibrinogenemia"/>
</dbReference>
<dbReference type="PharmGKB" id="PA163"/>
<dbReference type="VEuPathDB" id="HostDB:ENSG00000171564"/>
<dbReference type="eggNOG" id="KOG2579">
    <property type="taxonomic scope" value="Eukaryota"/>
</dbReference>
<dbReference type="GeneTree" id="ENSGT00940000158122"/>
<dbReference type="HOGENOM" id="CLU_038628_13_0_1"/>
<dbReference type="InParanoid" id="P02675"/>
<dbReference type="OMA" id="GCIHADP"/>
<dbReference type="OrthoDB" id="9930906at2759"/>
<dbReference type="PAN-GO" id="P02675">
    <property type="GO annotations" value="5 GO annotations based on evolutionary models"/>
</dbReference>
<dbReference type="PhylomeDB" id="P02675"/>
<dbReference type="TreeFam" id="TF336658"/>
<dbReference type="BioCyc" id="MetaCyc:ENSG00000171564-MONOMER"/>
<dbReference type="PathwayCommons" id="P02675"/>
<dbReference type="Reactome" id="R-HSA-114608">
    <property type="pathway name" value="Platelet degranulation"/>
</dbReference>
<dbReference type="Reactome" id="R-HSA-1236974">
    <property type="pathway name" value="ER-Phagosome pathway"/>
</dbReference>
<dbReference type="Reactome" id="R-HSA-140875">
    <property type="pathway name" value="Common Pathway of Fibrin Clot Formation"/>
</dbReference>
<dbReference type="Reactome" id="R-HSA-166058">
    <property type="pathway name" value="MyD88:MAL(TIRAP) cascade initiated on plasma membrane"/>
</dbReference>
<dbReference type="Reactome" id="R-HSA-216083">
    <property type="pathway name" value="Integrin cell surface interactions"/>
</dbReference>
<dbReference type="Reactome" id="R-HSA-354192">
    <property type="pathway name" value="Integrin signaling"/>
</dbReference>
<dbReference type="Reactome" id="R-HSA-354194">
    <property type="pathway name" value="GRB2:SOS provides linkage to MAPK signaling for Integrins"/>
</dbReference>
<dbReference type="Reactome" id="R-HSA-372708">
    <property type="pathway name" value="p130Cas linkage to MAPK signaling for integrins"/>
</dbReference>
<dbReference type="Reactome" id="R-HSA-5602498">
    <property type="pathway name" value="MyD88 deficiency (TLR2/4)"/>
</dbReference>
<dbReference type="Reactome" id="R-HSA-5603041">
    <property type="pathway name" value="IRAK4 deficiency (TLR2/4)"/>
</dbReference>
<dbReference type="Reactome" id="R-HSA-5674135">
    <property type="pathway name" value="MAP2K and MAPK activation"/>
</dbReference>
<dbReference type="Reactome" id="R-HSA-5686938">
    <property type="pathway name" value="Regulation of TLR by endogenous ligand"/>
</dbReference>
<dbReference type="Reactome" id="R-HSA-6802946">
    <property type="pathway name" value="Signaling by moderate kinase activity BRAF mutants"/>
</dbReference>
<dbReference type="Reactome" id="R-HSA-6802948">
    <property type="pathway name" value="Signaling by high-kinase activity BRAF mutants"/>
</dbReference>
<dbReference type="Reactome" id="R-HSA-6802952">
    <property type="pathway name" value="Signaling by BRAF and RAF1 fusions"/>
</dbReference>
<dbReference type="Reactome" id="R-HSA-6802955">
    <property type="pathway name" value="Paradoxical activation of RAF signaling by kinase inactive BRAF"/>
</dbReference>
<dbReference type="Reactome" id="R-HSA-9649948">
    <property type="pathway name" value="Signaling downstream of RAS mutants"/>
</dbReference>
<dbReference type="Reactome" id="R-HSA-9656223">
    <property type="pathway name" value="Signaling by RAF1 mutants"/>
</dbReference>
<dbReference type="SignaLink" id="P02675"/>
<dbReference type="SIGNOR" id="P02675"/>
<dbReference type="BioGRID-ORCS" id="2244">
    <property type="hits" value="15 hits in 1148 CRISPR screens"/>
</dbReference>
<dbReference type="CD-CODE" id="FB4E32DD">
    <property type="entry name" value="Presynaptic clusters and postsynaptic densities"/>
</dbReference>
<dbReference type="ChiTaRS" id="FGB">
    <property type="organism name" value="human"/>
</dbReference>
<dbReference type="EvolutionaryTrace" id="P02675"/>
<dbReference type="GeneWiki" id="Fibrinogen_beta_chain"/>
<dbReference type="GenomeRNAi" id="2244"/>
<dbReference type="Pharos" id="P02675">
    <property type="development level" value="Tbio"/>
</dbReference>
<dbReference type="PRO" id="PR:P02675"/>
<dbReference type="Proteomes" id="UP000005640">
    <property type="component" value="Chromosome 4"/>
</dbReference>
<dbReference type="RNAct" id="P02675">
    <property type="molecule type" value="protein"/>
</dbReference>
<dbReference type="Bgee" id="ENSG00000171564">
    <property type="expression patterns" value="Expressed in right lobe of liver and 119 other cell types or tissues"/>
</dbReference>
<dbReference type="ExpressionAtlas" id="P02675">
    <property type="expression patterns" value="baseline and differential"/>
</dbReference>
<dbReference type="GO" id="GO:0072562">
    <property type="term" value="C:blood microparticle"/>
    <property type="evidence" value="ECO:0007005"/>
    <property type="project" value="UniProtKB"/>
</dbReference>
<dbReference type="GO" id="GO:0005938">
    <property type="term" value="C:cell cortex"/>
    <property type="evidence" value="ECO:0007669"/>
    <property type="project" value="Ensembl"/>
</dbReference>
<dbReference type="GO" id="GO:0009986">
    <property type="term" value="C:cell surface"/>
    <property type="evidence" value="ECO:0000314"/>
    <property type="project" value="BHF-UCL"/>
</dbReference>
<dbReference type="GO" id="GO:0062023">
    <property type="term" value="C:collagen-containing extracellular matrix"/>
    <property type="evidence" value="ECO:0007005"/>
    <property type="project" value="BHF-UCL"/>
</dbReference>
<dbReference type="GO" id="GO:0005783">
    <property type="term" value="C:endoplasmic reticulum"/>
    <property type="evidence" value="ECO:0000314"/>
    <property type="project" value="HPA"/>
</dbReference>
<dbReference type="GO" id="GO:0009897">
    <property type="term" value="C:external side of plasma membrane"/>
    <property type="evidence" value="ECO:0000314"/>
    <property type="project" value="BHF-UCL"/>
</dbReference>
<dbReference type="GO" id="GO:0070062">
    <property type="term" value="C:extracellular exosome"/>
    <property type="evidence" value="ECO:0007005"/>
    <property type="project" value="UniProtKB"/>
</dbReference>
<dbReference type="GO" id="GO:0005576">
    <property type="term" value="C:extracellular region"/>
    <property type="evidence" value="ECO:0000304"/>
    <property type="project" value="Reactome"/>
</dbReference>
<dbReference type="GO" id="GO:0005615">
    <property type="term" value="C:extracellular space"/>
    <property type="evidence" value="ECO:0000314"/>
    <property type="project" value="BHF-UCL"/>
</dbReference>
<dbReference type="GO" id="GO:1903561">
    <property type="term" value="C:extracellular vesicle"/>
    <property type="evidence" value="ECO:0007005"/>
    <property type="project" value="UniProtKB"/>
</dbReference>
<dbReference type="GO" id="GO:0005577">
    <property type="term" value="C:fibrinogen complex"/>
    <property type="evidence" value="ECO:0000314"/>
    <property type="project" value="UniProtKB"/>
</dbReference>
<dbReference type="GO" id="GO:0005886">
    <property type="term" value="C:plasma membrane"/>
    <property type="evidence" value="ECO:0000304"/>
    <property type="project" value="Reactome"/>
</dbReference>
<dbReference type="GO" id="GO:0031091">
    <property type="term" value="C:platelet alpha granule"/>
    <property type="evidence" value="ECO:0000314"/>
    <property type="project" value="BHF-UCL"/>
</dbReference>
<dbReference type="GO" id="GO:0031093">
    <property type="term" value="C:platelet alpha granule lumen"/>
    <property type="evidence" value="ECO:0000304"/>
    <property type="project" value="Reactome"/>
</dbReference>
<dbReference type="GO" id="GO:0045202">
    <property type="term" value="C:synapse"/>
    <property type="evidence" value="ECO:0007669"/>
    <property type="project" value="Ensembl"/>
</dbReference>
<dbReference type="GO" id="GO:0005201">
    <property type="term" value="F:extracellular matrix structural constituent"/>
    <property type="evidence" value="ECO:0007005"/>
    <property type="project" value="BHF-UCL"/>
</dbReference>
<dbReference type="GO" id="GO:0051087">
    <property type="term" value="F:protein-folding chaperone binding"/>
    <property type="evidence" value="ECO:0000353"/>
    <property type="project" value="BHF-UCL"/>
</dbReference>
<dbReference type="GO" id="GO:0005102">
    <property type="term" value="F:signaling receptor binding"/>
    <property type="evidence" value="ECO:0007669"/>
    <property type="project" value="InterPro"/>
</dbReference>
<dbReference type="GO" id="GO:0005198">
    <property type="term" value="F:structural molecule activity"/>
    <property type="evidence" value="ECO:0000314"/>
    <property type="project" value="BHF-UCL"/>
</dbReference>
<dbReference type="GO" id="GO:0002250">
    <property type="term" value="P:adaptive immune response"/>
    <property type="evidence" value="ECO:0007669"/>
    <property type="project" value="UniProtKB-KW"/>
</dbReference>
<dbReference type="GO" id="GO:0072378">
    <property type="term" value="P:blood coagulation, fibrin clot formation"/>
    <property type="evidence" value="ECO:0000314"/>
    <property type="project" value="UniProtKB"/>
</dbReference>
<dbReference type="GO" id="GO:0007160">
    <property type="term" value="P:cell-matrix adhesion"/>
    <property type="evidence" value="ECO:0000314"/>
    <property type="project" value="BHF-UCL"/>
</dbReference>
<dbReference type="GO" id="GO:0071347">
    <property type="term" value="P:cellular response to interleukin-1"/>
    <property type="evidence" value="ECO:0007669"/>
    <property type="project" value="Ensembl"/>
</dbReference>
<dbReference type="GO" id="GO:0044320">
    <property type="term" value="P:cellular response to leptin stimulus"/>
    <property type="evidence" value="ECO:0007669"/>
    <property type="project" value="Ensembl"/>
</dbReference>
<dbReference type="GO" id="GO:0042730">
    <property type="term" value="P:fibrinolysis"/>
    <property type="evidence" value="ECO:0000314"/>
    <property type="project" value="UniProtKB"/>
</dbReference>
<dbReference type="GO" id="GO:0043152">
    <property type="term" value="P:induction of bacterial agglutination"/>
    <property type="evidence" value="ECO:0000314"/>
    <property type="project" value="CACAO"/>
</dbReference>
<dbReference type="GO" id="GO:0045087">
    <property type="term" value="P:innate immune response"/>
    <property type="evidence" value="ECO:0007669"/>
    <property type="project" value="UniProtKB-KW"/>
</dbReference>
<dbReference type="GO" id="GO:2000352">
    <property type="term" value="P:negative regulation of endothelial cell apoptotic process"/>
    <property type="evidence" value="ECO:0000314"/>
    <property type="project" value="BHF-UCL"/>
</dbReference>
<dbReference type="GO" id="GO:1902042">
    <property type="term" value="P:negative regulation of extrinsic apoptotic signaling pathway via death domain receptors"/>
    <property type="evidence" value="ECO:0000314"/>
    <property type="project" value="BHF-UCL"/>
</dbReference>
<dbReference type="GO" id="GO:0031639">
    <property type="term" value="P:plasminogen activation"/>
    <property type="evidence" value="ECO:0000314"/>
    <property type="project" value="UniProtKB"/>
</dbReference>
<dbReference type="GO" id="GO:0070527">
    <property type="term" value="P:platelet aggregation"/>
    <property type="evidence" value="ECO:0000314"/>
    <property type="project" value="BHF-UCL"/>
</dbReference>
<dbReference type="GO" id="GO:0070374">
    <property type="term" value="P:positive regulation of ERK1 and ERK2 cascade"/>
    <property type="evidence" value="ECO:0000314"/>
    <property type="project" value="BHF-UCL"/>
</dbReference>
<dbReference type="GO" id="GO:0045921">
    <property type="term" value="P:positive regulation of exocytosis"/>
    <property type="evidence" value="ECO:0000314"/>
    <property type="project" value="BHF-UCL"/>
</dbReference>
<dbReference type="GO" id="GO:0034116">
    <property type="term" value="P:positive regulation of heterotypic cell-cell adhesion"/>
    <property type="evidence" value="ECO:0000314"/>
    <property type="project" value="BHF-UCL"/>
</dbReference>
<dbReference type="GO" id="GO:0090277">
    <property type="term" value="P:positive regulation of peptide hormone secretion"/>
    <property type="evidence" value="ECO:0000314"/>
    <property type="project" value="BHF-UCL"/>
</dbReference>
<dbReference type="GO" id="GO:0050714">
    <property type="term" value="P:positive regulation of protein secretion"/>
    <property type="evidence" value="ECO:0000314"/>
    <property type="project" value="BHF-UCL"/>
</dbReference>
<dbReference type="GO" id="GO:1900026">
    <property type="term" value="P:positive regulation of substrate adhesion-dependent cell spreading"/>
    <property type="evidence" value="ECO:0000303"/>
    <property type="project" value="BHF-UCL"/>
</dbReference>
<dbReference type="GO" id="GO:0045907">
    <property type="term" value="P:positive regulation of vasoconstriction"/>
    <property type="evidence" value="ECO:0000314"/>
    <property type="project" value="BHF-UCL"/>
</dbReference>
<dbReference type="GO" id="GO:0051258">
    <property type="term" value="P:protein polymerization"/>
    <property type="evidence" value="ECO:0000314"/>
    <property type="project" value="BHF-UCL"/>
</dbReference>
<dbReference type="GO" id="GO:0065003">
    <property type="term" value="P:protein-containing complex assembly"/>
    <property type="evidence" value="ECO:0000314"/>
    <property type="project" value="BHF-UCL"/>
</dbReference>
<dbReference type="GO" id="GO:0051592">
    <property type="term" value="P:response to calcium ion"/>
    <property type="evidence" value="ECO:0000314"/>
    <property type="project" value="BHF-UCL"/>
</dbReference>
<dbReference type="CDD" id="cd00087">
    <property type="entry name" value="FReD"/>
    <property type="match status" value="1"/>
</dbReference>
<dbReference type="FunFam" id="1.20.5.50:FF:000004">
    <property type="entry name" value="Fibrinogen beta chain"/>
    <property type="match status" value="1"/>
</dbReference>
<dbReference type="FunFam" id="3.90.215.10:FF:000006">
    <property type="entry name" value="Fibrinogen beta chain"/>
    <property type="match status" value="1"/>
</dbReference>
<dbReference type="FunFam" id="4.10.530.10:FF:000004">
    <property type="entry name" value="Fibrinogen beta chain"/>
    <property type="match status" value="1"/>
</dbReference>
<dbReference type="Gene3D" id="1.20.5.50">
    <property type="match status" value="2"/>
</dbReference>
<dbReference type="Gene3D" id="3.90.215.10">
    <property type="entry name" value="Gamma Fibrinogen, chain A, domain 1"/>
    <property type="match status" value="1"/>
</dbReference>
<dbReference type="InterPro" id="IPR037579">
    <property type="entry name" value="FIB_ANG-like"/>
</dbReference>
<dbReference type="InterPro" id="IPR036056">
    <property type="entry name" value="Fibrinogen-like_C"/>
</dbReference>
<dbReference type="InterPro" id="IPR014716">
    <property type="entry name" value="Fibrinogen_a/b/g_C_1"/>
</dbReference>
<dbReference type="InterPro" id="IPR002181">
    <property type="entry name" value="Fibrinogen_a/b/g_C_dom"/>
</dbReference>
<dbReference type="InterPro" id="IPR012290">
    <property type="entry name" value="Fibrinogen_a/b/g_coil_dom"/>
</dbReference>
<dbReference type="InterPro" id="IPR020837">
    <property type="entry name" value="Fibrinogen_CS"/>
</dbReference>
<dbReference type="NCBIfam" id="NF040941">
    <property type="entry name" value="GGGWT_bact"/>
    <property type="match status" value="1"/>
</dbReference>
<dbReference type="PANTHER" id="PTHR47221">
    <property type="entry name" value="FIBRINOGEN ALPHA CHAIN"/>
    <property type="match status" value="1"/>
</dbReference>
<dbReference type="PANTHER" id="PTHR47221:SF5">
    <property type="entry name" value="FIBRINOGEN C-TERMINAL DOMAIN-CONTAINING PROTEIN"/>
    <property type="match status" value="1"/>
</dbReference>
<dbReference type="Pfam" id="PF08702">
    <property type="entry name" value="Fib_alpha"/>
    <property type="match status" value="1"/>
</dbReference>
<dbReference type="Pfam" id="PF00147">
    <property type="entry name" value="Fibrinogen_C"/>
    <property type="match status" value="1"/>
</dbReference>
<dbReference type="SMART" id="SM00186">
    <property type="entry name" value="FBG"/>
    <property type="match status" value="1"/>
</dbReference>
<dbReference type="SMART" id="SM01212">
    <property type="entry name" value="Fib_alpha"/>
    <property type="match status" value="1"/>
</dbReference>
<dbReference type="SUPFAM" id="SSF56496">
    <property type="entry name" value="Fibrinogen C-terminal domain-like"/>
    <property type="match status" value="1"/>
</dbReference>
<dbReference type="SUPFAM" id="SSF58010">
    <property type="entry name" value="Fibrinogen coiled-coil and central regions"/>
    <property type="match status" value="1"/>
</dbReference>
<dbReference type="PROSITE" id="PS00514">
    <property type="entry name" value="FIBRINOGEN_C_1"/>
    <property type="match status" value="1"/>
</dbReference>
<dbReference type="PROSITE" id="PS51406">
    <property type="entry name" value="FIBRINOGEN_C_2"/>
    <property type="match status" value="1"/>
</dbReference>
<sequence length="491" mass="55928">MKRMVSWSFHKLKTMKHLLLLLLCVFLVKSQGVNDNEEGFFSARGHRPLDKKREEAPSLRPAPPPISGGGYRARPAKAAATQKKVERKAPDAGGCLHADPDLGVLCPTGCQLQEALLQQERPIRNSVDELNNNVEAVSQTSSSSFQYMYLLKDLWQKRQKQVKDNENVVNEYSSELEKHQLYIDETVNSNIPTNLRVLRSILENLRSKIQKLESDVSAQMEYCRTPCTVSCNIPVVSGKECEEIIRKGGETSEMYLIQPDSSVKPYRVYCDMNTENGGWTVIQNRQDGSVDFGRKWDPYKQGFGNVATNTDGKNYCGLPGEYWLGNDKISQLTRMGPTELLIEMEDWKGDKVKAHYGGFTVQNEANKYQISVNKYRGTAGNALMDGASQLMGENRTMTIHNGMFFSTYDRDNDGWLTSDPRKQCSKEDGGGWWYNRCHAANPNGRYYWGGQYTWDMAKHGTDDGVVWMNWKGSWYSMRKMSMKIRPFFPQQ</sequence>
<feature type="signal peptide" evidence="21 23 25 26">
    <location>
        <begin position="1"/>
        <end position="30"/>
    </location>
</feature>
<feature type="peptide" id="PRO_0000009070" description="Fibrinopeptide B" evidence="8">
    <location>
        <begin position="31"/>
        <end position="44"/>
    </location>
</feature>
<feature type="chain" id="PRO_0000009071" description="Fibrinogen beta chain">
    <location>
        <begin position="45"/>
        <end position="491"/>
    </location>
</feature>
<feature type="domain" description="Fibrinogen C-terminal" evidence="2">
    <location>
        <begin position="232"/>
        <end position="488"/>
    </location>
</feature>
<feature type="region of interest" description="Disordered" evidence="3">
    <location>
        <begin position="44"/>
        <end position="75"/>
    </location>
</feature>
<feature type="region of interest" description="Beta-chain polymerization, binding distal domain of another fibrin">
    <location>
        <begin position="45"/>
        <end position="47"/>
    </location>
</feature>
<feature type="coiled-coil region" evidence="29 30 32">
    <location>
        <begin position="157"/>
        <end position="222"/>
    </location>
</feature>
<feature type="compositionally biased region" description="Basic and acidic residues" evidence="3">
    <location>
        <begin position="47"/>
        <end position="57"/>
    </location>
</feature>
<feature type="site" description="Cleavage; by thrombin; to release fibrinopeptide B">
    <location>
        <begin position="44"/>
        <end position="45"/>
    </location>
</feature>
<feature type="site" description="Cleavage; by plasmin; to break down fibrin clots">
    <location>
        <begin position="152"/>
        <end position="153"/>
    </location>
</feature>
<feature type="site" description="Cleavage; by hementin; to prevent blood coagulation">
    <location>
        <begin position="160"/>
        <end position="161"/>
    </location>
</feature>
<feature type="site" description="Cleavage; by plasmin; to break down fibrin clots">
    <location>
        <begin position="163"/>
        <end position="164"/>
    </location>
</feature>
<feature type="modified residue" description="Pyrrolidone carboxylic acid" evidence="21">
    <location>
        <position position="31"/>
    </location>
</feature>
<feature type="glycosylation site" description="N-linked (GlcNAc...) asparagine" evidence="4 11 12 14 24 25">
    <location>
        <position position="394"/>
    </location>
</feature>
<feature type="disulfide bond" description="Interchain (with C-55 in alpha chain)" evidence="15">
    <location>
        <position position="95"/>
    </location>
</feature>
<feature type="disulfide bond" description="Interchain (with C-68 in alpha chain)" evidence="15">
    <location>
        <position position="106"/>
    </location>
</feature>
<feature type="disulfide bond" description="Interchain (with C-45 in gamma chain)" evidence="31">
    <location>
        <position position="110"/>
    </location>
</feature>
<feature type="disulfide bond" description="Interchain (with C-184 in alpha chain)" evidence="4 15 22 24 33">
    <location>
        <position position="223"/>
    </location>
</feature>
<feature type="disulfide bond" description="Interchain (with C-161 in gamma chain)">
    <location>
        <position position="227"/>
    </location>
</feature>
<feature type="disulfide bond" evidence="4 15 22 24 33">
    <location>
        <begin position="231"/>
        <end position="316"/>
    </location>
</feature>
<feature type="disulfide bond" evidence="4 15 22 24 33">
    <location>
        <begin position="241"/>
        <end position="270"/>
    </location>
</feature>
<feature type="disulfide bond" evidence="4 15 22 24 33">
    <location>
        <begin position="424"/>
        <end position="437"/>
    </location>
</feature>
<feature type="sequence variant" id="VAR_014169" description="In dbSNP:rs6053." evidence="5">
    <original>K</original>
    <variation>E</variation>
    <location>
        <position position="2"/>
    </location>
</feature>
<feature type="sequence variant" id="VAR_002402" description="In New York-1." evidence="19">
    <location>
        <begin position="39"/>
        <end position="102"/>
    </location>
</feature>
<feature type="sequence variant" id="VAR_002403" description="In Christchurch-2, Seattle-1 and Ijmuiden; dbSNP:rs121909616." evidence="10">
    <original>R</original>
    <variation>C</variation>
    <location>
        <position position="44"/>
    </location>
</feature>
<feature type="sequence variant" id="VAR_002404" description="In Ise." evidence="16">
    <original>G</original>
    <variation>R</variation>
    <location>
        <position position="45"/>
    </location>
</feature>
<feature type="sequence variant" id="VAR_002405" description="In Nijmegen; dbSNP:rs121909619." evidence="10">
    <original>R</original>
    <variation>C</variation>
    <location>
        <position position="74"/>
    </location>
</feature>
<feature type="sequence variant" id="VAR_072724" description="In CAFBN; hypofibrinogenemia; heterozygous; decreased fibrinogen complex assembly; no effect on fibrinogen complex secretion." evidence="18">
    <original>C</original>
    <variation>R</variation>
    <location>
        <position position="95"/>
    </location>
</feature>
<feature type="sequence variant" id="VAR_002406" description="In DYSFIBRIN; fibrinogen Naples and Milano-2; defective thrombin binding resulting in decreased release of fibrinopeptide B; dbSNP:rs121909620." evidence="13">
    <original>A</original>
    <variation>T</variation>
    <location>
        <position position="98"/>
    </location>
</feature>
<feature type="sequence variant" id="VAR_013091" description="In dbSNP:rs2227434." evidence="27">
    <original>P</original>
    <variation>S</variation>
    <location>
        <position position="100"/>
    </location>
</feature>
<feature type="sequence variant" id="VAR_013092" description="In dbSNP:rs2227409." evidence="27">
    <original>N</original>
    <variation>H</variation>
    <location>
        <position position="170"/>
    </location>
</feature>
<feature type="sequence variant" id="VAR_016908" description="In CAFBN; fibrinogen Longmont; dbSNP:rs121909623." evidence="7">
    <original>R</original>
    <variation>C</variation>
    <location>
        <position position="196"/>
    </location>
</feature>
<feature type="sequence variant" id="VAR_072620" description="In CAFBN; dbSNP:rs121909624." evidence="9">
    <original>L</original>
    <variation>Q</variation>
    <location>
        <position position="202"/>
    </location>
</feature>
<feature type="sequence variant" id="VAR_013093" description="In dbSNP:rs6054." evidence="5 27">
    <original>P</original>
    <variation>L</variation>
    <location>
        <position position="265"/>
    </location>
</feature>
<feature type="sequence variant" id="VAR_002407" description="In Pontoise-2; dbSNP:rs121909617.">
    <original>A</original>
    <variation>T</variation>
    <location>
        <position position="365"/>
    </location>
</feature>
<feature type="sequence variant" id="VAR_016909" description="In CAFBN; abolishes fibrinogen secretion; dbSNP:rs121909621." evidence="6">
    <original>L</original>
    <variation>R</variation>
    <location>
        <position position="383"/>
    </location>
</feature>
<feature type="sequence variant" id="VAR_072725" description="In CAFBN; homozygous; heterozygous; no effect on fibrinogen complex assembly; impaired fibrinogen complex secretion." evidence="18">
    <original>T</original>
    <variation>K</variation>
    <location>
        <position position="407"/>
    </location>
</feature>
<feature type="sequence variant" id="VAR_016910" description="In CAFBN; abolishes fibrinogen secretion; dbSNP:rs121909622." evidence="6">
    <original>G</original>
    <variation>D</variation>
    <location>
        <position position="430"/>
    </location>
</feature>
<feature type="sequence variant" id="VAR_002408" description="In Baltimore-2; dbSNP:rs4220." evidence="5 20 27">
    <original>R</original>
    <variation>K</variation>
    <location>
        <position position="478"/>
    </location>
</feature>
<feature type="sequence conflict" description="In Ref. 11; AA sequence and 12; AA sequence." evidence="28" ref="11 12">
    <original>SQ</original>
    <variation>QS</variation>
    <location>
        <begin position="138"/>
        <end position="139"/>
    </location>
</feature>
<feature type="sequence conflict" description="In Ref. 10; AA sequence, 11; AA sequence and 12; AA sequence." evidence="28" ref="10 11 12">
    <original>FQ</original>
    <variation>QF</variation>
    <location>
        <begin position="145"/>
        <end position="146"/>
    </location>
</feature>
<feature type="sequence conflict" description="In Ref. 1; AAA52429." evidence="28" ref="1">
    <original>P</original>
    <variation>A</variation>
    <location>
        <position position="192"/>
    </location>
</feature>
<feature type="sequence conflict" description="In Ref. 7; AAI07767." evidence="28" ref="7">
    <original>I</original>
    <variation>T</variation>
    <location>
        <position position="245"/>
    </location>
</feature>
<feature type="turn" evidence="45">
    <location>
        <begin position="100"/>
        <end position="102"/>
    </location>
</feature>
<feature type="helix" evidence="45">
    <location>
        <begin position="109"/>
        <end position="145"/>
    </location>
</feature>
<feature type="helix" evidence="45">
    <location>
        <begin position="147"/>
        <end position="167"/>
    </location>
</feature>
<feature type="helix" evidence="45">
    <location>
        <begin position="172"/>
        <end position="180"/>
    </location>
</feature>
<feature type="turn" evidence="36">
    <location>
        <begin position="182"/>
        <end position="189"/>
    </location>
</feature>
<feature type="helix" evidence="36">
    <location>
        <begin position="190"/>
        <end position="222"/>
    </location>
</feature>
<feature type="strand" evidence="39">
    <location>
        <begin position="224"/>
        <end position="226"/>
    </location>
</feature>
<feature type="strand" evidence="36">
    <location>
        <begin position="233"/>
        <end position="235"/>
    </location>
</feature>
<feature type="strand" evidence="36">
    <location>
        <begin position="238"/>
        <end position="240"/>
    </location>
</feature>
<feature type="helix" evidence="36">
    <location>
        <begin position="241"/>
        <end position="246"/>
    </location>
</feature>
<feature type="strand" evidence="36">
    <location>
        <begin position="253"/>
        <end position="257"/>
    </location>
</feature>
<feature type="strand" evidence="41">
    <location>
        <begin position="261"/>
        <end position="263"/>
    </location>
</feature>
<feature type="strand" evidence="36">
    <location>
        <begin position="266"/>
        <end position="271"/>
    </location>
</feature>
<feature type="helix" evidence="36">
    <location>
        <begin position="274"/>
        <end position="276"/>
    </location>
</feature>
<feature type="strand" evidence="36">
    <location>
        <begin position="279"/>
        <end position="288"/>
    </location>
</feature>
<feature type="helix" evidence="36">
    <location>
        <begin position="296"/>
        <end position="301"/>
    </location>
</feature>
<feature type="strand" evidence="37">
    <location>
        <begin position="302"/>
        <end position="304"/>
    </location>
</feature>
<feature type="strand" evidence="36">
    <location>
        <begin position="306"/>
        <end position="308"/>
    </location>
</feature>
<feature type="strand" evidence="38">
    <location>
        <begin position="311"/>
        <end position="315"/>
    </location>
</feature>
<feature type="strand" evidence="36">
    <location>
        <begin position="321"/>
        <end position="323"/>
    </location>
</feature>
<feature type="helix" evidence="36">
    <location>
        <begin position="326"/>
        <end position="334"/>
    </location>
</feature>
<feature type="strand" evidence="39">
    <location>
        <begin position="335"/>
        <end position="337"/>
    </location>
</feature>
<feature type="strand" evidence="36">
    <location>
        <begin position="339"/>
        <end position="345"/>
    </location>
</feature>
<feature type="strand" evidence="34">
    <location>
        <begin position="347"/>
        <end position="349"/>
    </location>
</feature>
<feature type="strand" evidence="36">
    <location>
        <begin position="351"/>
        <end position="361"/>
    </location>
</feature>
<feature type="helix" evidence="36">
    <location>
        <begin position="364"/>
        <end position="366"/>
    </location>
</feature>
<feature type="strand" evidence="36">
    <location>
        <begin position="370"/>
        <end position="379"/>
    </location>
</feature>
<feature type="helix" evidence="36">
    <location>
        <begin position="382"/>
        <end position="385"/>
    </location>
</feature>
<feature type="strand" evidence="40">
    <location>
        <begin position="388"/>
        <end position="390"/>
    </location>
</feature>
<feature type="helix" evidence="36">
    <location>
        <begin position="392"/>
        <end position="396"/>
    </location>
</feature>
<feature type="strand" evidence="39">
    <location>
        <begin position="404"/>
        <end position="407"/>
    </location>
</feature>
<feature type="strand" evidence="35">
    <location>
        <begin position="408"/>
        <end position="410"/>
    </location>
</feature>
<feature type="helix" evidence="42">
    <location>
        <begin position="420"/>
        <end position="422"/>
    </location>
</feature>
<feature type="turn" evidence="36">
    <location>
        <begin position="424"/>
        <end position="428"/>
    </location>
</feature>
<feature type="strand" evidence="36">
    <location>
        <begin position="435"/>
        <end position="437"/>
    </location>
</feature>
<feature type="strand" evidence="44">
    <location>
        <begin position="439"/>
        <end position="441"/>
    </location>
</feature>
<feature type="strand" evidence="43">
    <location>
        <begin position="448"/>
        <end position="451"/>
    </location>
</feature>
<feature type="turn" evidence="36">
    <location>
        <begin position="454"/>
        <end position="456"/>
    </location>
</feature>
<feature type="strand" evidence="46">
    <location>
        <begin position="457"/>
        <end position="461"/>
    </location>
</feature>
<feature type="strand" evidence="44">
    <location>
        <begin position="464"/>
        <end position="467"/>
    </location>
</feature>
<feature type="helix" evidence="36">
    <location>
        <begin position="468"/>
        <end position="471"/>
    </location>
</feature>
<feature type="strand" evidence="41">
    <location>
        <begin position="473"/>
        <end position="475"/>
    </location>
</feature>
<feature type="strand" evidence="36">
    <location>
        <begin position="478"/>
        <end position="485"/>
    </location>
</feature>
<reference key="1">
    <citation type="journal article" date="1983" name="Biochemistry">
        <title>Characterization of complementary deoxyribonucleic acid and genomic deoxyribonucleic acid for the beta chain of human fibrinogen.</title>
        <authorList>
            <person name="Chung D.W."/>
            <person name="Que B.G."/>
            <person name="Rixon M.W."/>
            <person name="Mace M. Jr."/>
            <person name="Davie E.W."/>
        </authorList>
    </citation>
    <scope>NUCLEOTIDE SEQUENCE [GENOMIC DNA / MRNA]</scope>
</reference>
<reference key="2">
    <citation type="journal article" date="1990" name="Adv. Exp. Med. Biol.">
        <title>Nucleotide sequences of the three genes coding for human fibrinogen.</title>
        <authorList>
            <person name="Chung D.W."/>
            <person name="Harris J.E."/>
            <person name="Davie E.W."/>
        </authorList>
    </citation>
    <scope>NUCLEOTIDE SEQUENCE [GENOMIC DNA]</scope>
</reference>
<reference key="3">
    <citation type="book" date="1991" name="Fibrinogen, thrombosis, coagulation and fibrinolysis">
        <title>Nucleotide sequences of the three genes coding for human fibrinogen.</title>
        <editorList>
            <person name="Liu C.Y."/>
            <person name="Chien S."/>
        </editorList>
        <authorList>
            <person name="Chung D.W."/>
            <person name="Harris J.E."/>
            <person name="Davie E.W."/>
        </authorList>
    </citation>
    <scope>NUCLEOTIDE SEQUENCE [GENOMIC DNA]</scope>
</reference>
<reference key="4">
    <citation type="submission" date="2001-06" db="EMBL/GenBank/DDBJ databases">
        <authorList>
            <consortium name="SeattleSNPs variation discovery resource"/>
        </authorList>
    </citation>
    <scope>NUCLEOTIDE SEQUENCE [GENOMIC DNA]</scope>
    <scope>VARIANTS SER-100; HIS-170; LEU-265 AND LYS-478</scope>
</reference>
<reference key="5">
    <citation type="journal article" date="2004" name="Nat. Genet.">
        <title>Complete sequencing and characterization of 21,243 full-length human cDNAs.</title>
        <authorList>
            <person name="Ota T."/>
            <person name="Suzuki Y."/>
            <person name="Nishikawa T."/>
            <person name="Otsuki T."/>
            <person name="Sugiyama T."/>
            <person name="Irie R."/>
            <person name="Wakamatsu A."/>
            <person name="Hayashi K."/>
            <person name="Sato H."/>
            <person name="Nagai K."/>
            <person name="Kimura K."/>
            <person name="Makita H."/>
            <person name="Sekine M."/>
            <person name="Obayashi M."/>
            <person name="Nishi T."/>
            <person name="Shibahara T."/>
            <person name="Tanaka T."/>
            <person name="Ishii S."/>
            <person name="Yamamoto J."/>
            <person name="Saito K."/>
            <person name="Kawai Y."/>
            <person name="Isono Y."/>
            <person name="Nakamura Y."/>
            <person name="Nagahari K."/>
            <person name="Murakami K."/>
            <person name="Yasuda T."/>
            <person name="Iwayanagi T."/>
            <person name="Wagatsuma M."/>
            <person name="Shiratori A."/>
            <person name="Sudo H."/>
            <person name="Hosoiri T."/>
            <person name="Kaku Y."/>
            <person name="Kodaira H."/>
            <person name="Kondo H."/>
            <person name="Sugawara M."/>
            <person name="Takahashi M."/>
            <person name="Kanda K."/>
            <person name="Yokoi T."/>
            <person name="Furuya T."/>
            <person name="Kikkawa E."/>
            <person name="Omura Y."/>
            <person name="Abe K."/>
            <person name="Kamihara K."/>
            <person name="Katsuta N."/>
            <person name="Sato K."/>
            <person name="Tanikawa M."/>
            <person name="Yamazaki M."/>
            <person name="Ninomiya K."/>
            <person name="Ishibashi T."/>
            <person name="Yamashita H."/>
            <person name="Murakawa K."/>
            <person name="Fujimori K."/>
            <person name="Tanai H."/>
            <person name="Kimata M."/>
            <person name="Watanabe M."/>
            <person name="Hiraoka S."/>
            <person name="Chiba Y."/>
            <person name="Ishida S."/>
            <person name="Ono Y."/>
            <person name="Takiguchi S."/>
            <person name="Watanabe S."/>
            <person name="Yosida M."/>
            <person name="Hotuta T."/>
            <person name="Kusano J."/>
            <person name="Kanehori K."/>
            <person name="Takahashi-Fujii A."/>
            <person name="Hara H."/>
            <person name="Tanase T.-O."/>
            <person name="Nomura Y."/>
            <person name="Togiya S."/>
            <person name="Komai F."/>
            <person name="Hara R."/>
            <person name="Takeuchi K."/>
            <person name="Arita M."/>
            <person name="Imose N."/>
            <person name="Musashino K."/>
            <person name="Yuuki H."/>
            <person name="Oshima A."/>
            <person name="Sasaki N."/>
            <person name="Aotsuka S."/>
            <person name="Yoshikawa Y."/>
            <person name="Matsunawa H."/>
            <person name="Ichihara T."/>
            <person name="Shiohata N."/>
            <person name="Sano S."/>
            <person name="Moriya S."/>
            <person name="Momiyama H."/>
            <person name="Satoh N."/>
            <person name="Takami S."/>
            <person name="Terashima Y."/>
            <person name="Suzuki O."/>
            <person name="Nakagawa S."/>
            <person name="Senoh A."/>
            <person name="Mizoguchi H."/>
            <person name="Goto Y."/>
            <person name="Shimizu F."/>
            <person name="Wakebe H."/>
            <person name="Hishigaki H."/>
            <person name="Watanabe T."/>
            <person name="Sugiyama A."/>
            <person name="Takemoto M."/>
            <person name="Kawakami B."/>
            <person name="Yamazaki M."/>
            <person name="Watanabe K."/>
            <person name="Kumagai A."/>
            <person name="Itakura S."/>
            <person name="Fukuzumi Y."/>
            <person name="Fujimori Y."/>
            <person name="Komiyama M."/>
            <person name="Tashiro H."/>
            <person name="Tanigami A."/>
            <person name="Fujiwara T."/>
            <person name="Ono T."/>
            <person name="Yamada K."/>
            <person name="Fujii Y."/>
            <person name="Ozaki K."/>
            <person name="Hirao M."/>
            <person name="Ohmori Y."/>
            <person name="Kawabata A."/>
            <person name="Hikiji T."/>
            <person name="Kobatake N."/>
            <person name="Inagaki H."/>
            <person name="Ikema Y."/>
            <person name="Okamoto S."/>
            <person name="Okitani R."/>
            <person name="Kawakami T."/>
            <person name="Noguchi S."/>
            <person name="Itoh T."/>
            <person name="Shigeta K."/>
            <person name="Senba T."/>
            <person name="Matsumura K."/>
            <person name="Nakajima Y."/>
            <person name="Mizuno T."/>
            <person name="Morinaga M."/>
            <person name="Sasaki M."/>
            <person name="Togashi T."/>
            <person name="Oyama M."/>
            <person name="Hata H."/>
            <person name="Watanabe M."/>
            <person name="Komatsu T."/>
            <person name="Mizushima-Sugano J."/>
            <person name="Satoh T."/>
            <person name="Shirai Y."/>
            <person name="Takahashi Y."/>
            <person name="Nakagawa K."/>
            <person name="Okumura K."/>
            <person name="Nagase T."/>
            <person name="Nomura N."/>
            <person name="Kikuchi H."/>
            <person name="Masuho Y."/>
            <person name="Yamashita R."/>
            <person name="Nakai K."/>
            <person name="Yada T."/>
            <person name="Nakamura Y."/>
            <person name="Ohara O."/>
            <person name="Isogai T."/>
            <person name="Sugano S."/>
        </authorList>
    </citation>
    <scope>NUCLEOTIDE SEQUENCE [LARGE SCALE MRNA]</scope>
    <source>
        <tissue>Mammary gland</tissue>
    </source>
</reference>
<reference key="6">
    <citation type="submission" date="2005-09" db="EMBL/GenBank/DDBJ databases">
        <authorList>
            <person name="Mural R.J."/>
            <person name="Istrail S."/>
            <person name="Sutton G.G."/>
            <person name="Florea L."/>
            <person name="Halpern A.L."/>
            <person name="Mobarry C.M."/>
            <person name="Lippert R."/>
            <person name="Walenz B."/>
            <person name="Shatkay H."/>
            <person name="Dew I."/>
            <person name="Miller J.R."/>
            <person name="Flanigan M.J."/>
            <person name="Edwards N.J."/>
            <person name="Bolanos R."/>
            <person name="Fasulo D."/>
            <person name="Halldorsson B.V."/>
            <person name="Hannenhalli S."/>
            <person name="Turner R."/>
            <person name="Yooseph S."/>
            <person name="Lu F."/>
            <person name="Nusskern D.R."/>
            <person name="Shue B.C."/>
            <person name="Zheng X.H."/>
            <person name="Zhong F."/>
            <person name="Delcher A.L."/>
            <person name="Huson D.H."/>
            <person name="Kravitz S.A."/>
            <person name="Mouchard L."/>
            <person name="Reinert K."/>
            <person name="Remington K.A."/>
            <person name="Clark A.G."/>
            <person name="Waterman M.S."/>
            <person name="Eichler E.E."/>
            <person name="Adams M.D."/>
            <person name="Hunkapiller M.W."/>
            <person name="Myers E.W."/>
            <person name="Venter J.C."/>
        </authorList>
    </citation>
    <scope>NUCLEOTIDE SEQUENCE [LARGE SCALE GENOMIC DNA]</scope>
</reference>
<reference key="7">
    <citation type="journal article" date="2004" name="Genome Res.">
        <title>The status, quality, and expansion of the NIH full-length cDNA project: the Mammalian Gene Collection (MGC).</title>
        <authorList>
            <consortium name="The MGC Project Team"/>
        </authorList>
    </citation>
    <scope>NUCLEOTIDE SEQUENCE [LARGE SCALE MRNA]</scope>
    <source>
        <tissue>Liver</tissue>
    </source>
</reference>
<reference key="8">
    <citation type="journal article" date="1983" name="Ann. N. Y. Acad. Sci.">
        <title>Cloning of fibrinogen genes and their cDNA.</title>
        <authorList>
            <person name="Chung D.W."/>
            <person name="Rixon M.W."/>
            <person name="Que B.G."/>
            <person name="Davie E.W."/>
        </authorList>
    </citation>
    <scope>NUCLEOTIDE SEQUENCE [MRNA] OF 1-60</scope>
</reference>
<reference key="9">
    <citation type="journal article" date="1987" name="Nucleic Acids Res.">
        <title>Characterization of the 5'-flanking region for the human fibrinogen beta gene.</title>
        <authorList>
            <person name="Huber P."/>
            <person name="Dalmon J."/>
            <person name="Courtois G."/>
            <person name="Laurent M."/>
            <person name="Assouline Z."/>
            <person name="Marguerie G."/>
        </authorList>
    </citation>
    <scope>NUCLEOTIDE SEQUENCE [GENOMIC DNA] OF 1-38</scope>
</reference>
<reference key="10">
    <citation type="journal article" date="1979" name="Biochemistry">
        <title>Amino acid sequence of the beta chain of human fibrinogen.</title>
        <authorList>
            <person name="Watt K.W.K."/>
            <person name="Takagi T."/>
            <person name="Doolittle R.F."/>
        </authorList>
    </citation>
    <scope>PROTEIN SEQUENCE OF 31-491</scope>
    <scope>PYROGLUTAMATE FORMATION AT GLN-31</scope>
</reference>
<reference key="11">
    <citation type="book" date="1980" name="Protides of the biological fluids, Proc. 28th colloquium">
        <title>Human fibrinogen: sequence, sulfur bridges, glycosylation and some structural variants.</title>
        <editorList>
            <person name="Peeters H."/>
        </editorList>
        <authorList>
            <person name="Henschen A."/>
            <person name="Lottspeich F."/>
            <person name="Southan C."/>
            <person name="Topfer-Petersen E."/>
        </authorList>
    </citation>
    <scope>PROTEIN SEQUENCE OF 31-491</scope>
    <scope>GLYCOSYLATION AT ASN-394</scope>
</reference>
<reference key="12">
    <citation type="journal article" date="1976" name="Thromb. Res.">
        <title>Disulfide bridges in NH2-terminal part of human fibrinogen.</title>
        <authorList>
            <person name="Blombaeck B."/>
            <person name="Hessel B."/>
            <person name="Hogg D."/>
        </authorList>
    </citation>
    <scope>PROTEIN SEQUENCE OF 31-148</scope>
    <scope>DISULFIDE BONDS</scope>
</reference>
<reference key="13">
    <citation type="journal article" date="1965" name="Acta Chem. Scand.">
        <title>Studies on fibrinopeptides from primates.</title>
        <authorList>
            <person name="Blombaeck B."/>
            <person name="Blombaeck M."/>
            <person name="Grondahl N.J."/>
            <person name="Guthrie C."/>
            <person name="Hinton M."/>
        </authorList>
    </citation>
    <scope>PROTEIN SEQUENCE OF 31-44</scope>
</reference>
<reference key="14">
    <citation type="journal article" date="2003" name="Nat. Biotechnol.">
        <title>Exploring proteomes and analyzing protein processing by mass spectrometric identification of sorted N-terminal peptides.</title>
        <authorList>
            <person name="Gevaert K."/>
            <person name="Goethals M."/>
            <person name="Martens L."/>
            <person name="Van Damme J."/>
            <person name="Staes A."/>
            <person name="Thomas G.R."/>
            <person name="Vandekerckhove J."/>
        </authorList>
    </citation>
    <scope>PROTEIN SEQUENCE OF 45-53</scope>
    <source>
        <tissue>Platelet</tissue>
    </source>
</reference>
<reference key="15">
    <citation type="submission" date="2008-12" db="UniProtKB">
        <authorList>
            <person name="Lubec G."/>
            <person name="Chen W.-Q."/>
            <person name="Sun Y."/>
        </authorList>
    </citation>
    <scope>PROTEIN SEQUENCE OF 54-72; 164-178 AND 225-239</scope>
    <scope>IDENTIFICATION BY MASS SPECTROMETRY</scope>
    <source>
        <tissue>Fetal brain cortex</tissue>
    </source>
</reference>
<reference key="16">
    <citation type="journal article" date="1983" name="Ann. N. Y. Acad. Sci.">
        <title>Covalent structure of fibrinogen.</title>
        <authorList>
            <person name="Henschen A."/>
            <person name="Lottspeich F."/>
            <person name="Kehl M."/>
            <person name="Southan C."/>
        </authorList>
    </citation>
    <scope>REVIEW</scope>
    <scope>DISULFIDE BONDS</scope>
</reference>
<reference key="17">
    <citation type="journal article" date="1977" name="Eur. J. Biochem.">
        <title>Primary structure of human fibrinogen. Characterization of disulfide-containing cyanogen-bromide fragments.</title>
        <authorList>
            <person name="Gaardlund B."/>
            <person name="Hessel B."/>
            <person name="Marguerie G."/>
            <person name="Murano G."/>
            <person name="Blombaeck B."/>
        </authorList>
    </citation>
    <scope>DISULFIDE BONDS</scope>
</reference>
<reference key="18">
    <citation type="book" date="1978" name="Regulatory proteolytic enzymes and their inhibitors">
        <title>The structures of fibrinogen and fibrin.</title>
        <editorList>
            <person name="Magnusson S."/>
            <person name="Ottesen M."/>
            <person name="Foltmann B."/>
            <person name="Dano K."/>
            <person name="Neurath H."/>
        </editorList>
        <authorList>
            <person name="Doolittle R.F."/>
            <person name="Takagi T."/>
            <person name="Watt K.W.K."/>
            <person name="Bouma H. III"/>
            <person name="Cottrell B.A."/>
            <person name="Cassman K.G."/>
            <person name="Goldbaum D.M."/>
            <person name="Doolittle L.R."/>
            <person name="Friezner S.J."/>
        </authorList>
    </citation>
    <scope>DISULFIDE BONDS</scope>
</reference>
<reference key="19">
    <citation type="journal article" date="1984" name="Annu. Rev. Biochem.">
        <title>Fibrinogen and fibrin.</title>
        <authorList>
            <person name="Doolittle R.F."/>
        </authorList>
    </citation>
    <scope>REVIEW</scope>
    <scope>ELECTRON MICROSCOPY</scope>
    <scope>POLYMERIZATION</scope>
    <scope>LIGANDS</scope>
</reference>
<reference key="20">
    <citation type="journal article" date="1995" name="J. Biol. Chem.">
        <title>The interaction of fibulin-1 with fibrinogen. A potential role in hemostasis and thrombosis.</title>
        <authorList>
            <person name="Tran H."/>
            <person name="Tanaka A."/>
            <person name="Litvinovich S.V."/>
            <person name="Medved L.V."/>
            <person name="Haudenschild C.C."/>
            <person name="Argraves W.S."/>
        </authorList>
    </citation>
    <scope>INTERACTION WITH FBLN1</scope>
</reference>
<reference key="21">
    <citation type="journal article" date="2005" name="J. Proteome Res.">
        <title>Human plasma N-glycoproteome analysis by immunoaffinity subtraction, hydrazide chemistry, and mass spectrometry.</title>
        <authorList>
            <person name="Liu T."/>
            <person name="Qian W.-J."/>
            <person name="Gritsenko M.A."/>
            <person name="Camp D.G. II"/>
            <person name="Monroe M.E."/>
            <person name="Moore R.J."/>
            <person name="Smith R.D."/>
        </authorList>
    </citation>
    <scope>GLYCOSYLATION [LARGE SCALE ANALYSIS] AT ASN-394</scope>
    <source>
        <tissue>Plasma</tissue>
    </source>
</reference>
<reference key="22">
    <citation type="journal article" date="2006" name="Mol. Cell. Proteomics">
        <title>Elucidation of N-glycosylation sites on human platelet proteins: a glycoproteomic approach.</title>
        <authorList>
            <person name="Lewandrowski U."/>
            <person name="Moebius J."/>
            <person name="Walter U."/>
            <person name="Sickmann A."/>
        </authorList>
    </citation>
    <scope>GLYCOSYLATION [LARGE SCALE ANALYSIS] AT ASN-394</scope>
    <source>
        <tissue>Platelet</tissue>
    </source>
</reference>
<reference key="23">
    <citation type="journal article" date="2009" name="J. Proteome Res.">
        <title>Glycoproteomics analysis of human liver tissue by combination of multiple enzyme digestion and hydrazide chemistry.</title>
        <authorList>
            <person name="Chen R."/>
            <person name="Jiang X."/>
            <person name="Sun D."/>
            <person name="Han G."/>
            <person name="Wang F."/>
            <person name="Ye M."/>
            <person name="Wang L."/>
            <person name="Zou H."/>
        </authorList>
    </citation>
    <scope>GLYCOSYLATION [LARGE SCALE ANALYSIS] AT ASN-394</scope>
    <source>
        <tissue>Liver</tissue>
    </source>
</reference>
<reference key="24">
    <citation type="journal article" date="1990" name="J. Biol. Chem.">
        <title>A unique proteolytic fragment of human fibrinogen containing the A alpha COOH-terminal domain of the native molecule.</title>
        <authorList>
            <person name="Kirschbaum N.E."/>
            <person name="Budzynski A.Z."/>
        </authorList>
    </citation>
    <scope>CLEAVAGE BY HEMENTIN AND PLASMIN</scope>
</reference>
<reference key="25">
    <citation type="journal article" date="2011" name="BMC Syst. Biol.">
        <title>Initial characterization of the human central proteome.</title>
        <authorList>
            <person name="Burkard T.R."/>
            <person name="Planyavsky M."/>
            <person name="Kaupe I."/>
            <person name="Breitwieser F.P."/>
            <person name="Buerckstuemmer T."/>
            <person name="Bennett K.L."/>
            <person name="Superti-Furga G."/>
            <person name="Colinge J."/>
        </authorList>
    </citation>
    <scope>IDENTIFICATION BY MASS SPECTROMETRY [LARGE SCALE ANALYSIS]</scope>
</reference>
<reference key="26">
    <citation type="journal article" date="2014" name="J. Proteomics">
        <title>An enzyme assisted RP-RPLC approach for in-depth analysis of human liver phosphoproteome.</title>
        <authorList>
            <person name="Bian Y."/>
            <person name="Song C."/>
            <person name="Cheng K."/>
            <person name="Dong M."/>
            <person name="Wang F."/>
            <person name="Huang J."/>
            <person name="Sun D."/>
            <person name="Wang L."/>
            <person name="Ye M."/>
            <person name="Zou H."/>
        </authorList>
    </citation>
    <scope>IDENTIFICATION BY MASS SPECTROMETRY [LARGE SCALE ANALYSIS]</scope>
    <source>
        <tissue>Liver</tissue>
    </source>
</reference>
<reference key="27">
    <citation type="journal article" date="1997" name="Nature">
        <title>Crystal structures of fragment D from human fibrinogen and its crosslinked counterpart from fibrin.</title>
        <authorList>
            <person name="Spraggon G."/>
            <person name="Everse S.J."/>
            <person name="Doolittle R.F."/>
        </authorList>
    </citation>
    <scope>X-RAY CRYSTALLOGRAPHY (2.90 ANGSTROMS) OF 164-491</scope>
    <scope>DISULFIDE BONDS</scope>
    <scope>SUBUNIT</scope>
</reference>
<reference key="28">
    <citation type="journal article" date="1998" name="Biochemistry">
        <title>Crystal structure of fragment double-D from human fibrin with two different bound ligands.</title>
        <authorList>
            <person name="Everse S.J."/>
            <person name="Spraggon G."/>
            <person name="Veerapandian L."/>
            <person name="Riley M."/>
            <person name="Doolittle R.F."/>
        </authorList>
    </citation>
    <scope>X-RAY CRYSTALLOGRAPHY (2.30 ANGSTROMS) OF 164-491 IN COMPLEX WITH CALCIUM</scope>
    <scope>DISULFIDE BONDS</scope>
    <scope>GLYCOSYLATION AT ASN-394</scope>
    <scope>SUBUNIT</scope>
    <scope>COILED COIL DOMAIN</scope>
    <scope>SUBCELLULAR LOCATION</scope>
    <scope>TISSUE SPECIFICITY</scope>
</reference>
<reference key="29">
    <citation type="journal article" date="1999" name="Biochemistry">
        <title>Conformational changes in fragments D and double-D from human fibrin(ogen) upon binding the peptide ligand Gly-His-Arg-Pro-amide.</title>
        <authorList>
            <person name="Everse S.J."/>
            <person name="Spraggon G."/>
            <person name="Veerapandian L."/>
            <person name="Doolittle R.F."/>
        </authorList>
    </citation>
    <scope>X-RAY CRYSTALLOGRAPHY (2.50 ANGSTROMS) OF 164-491 IN COMPLEX WITH CALCIUM</scope>
    <scope>DISULFIDE BONDS</scope>
    <scope>GLYCOSYLATION AT ASN-394</scope>
    <scope>SUBUNIT</scope>
    <scope>SUBCELLULAR LOCATION</scope>
    <scope>TISSUE SPECIFICITY</scope>
    <scope>COILED COIL DOMAIN</scope>
</reference>
<reference key="30">
    <citation type="journal article" date="2009" name="Biochemistry">
        <title>Crystal structure of human fibrinogen.</title>
        <authorList>
            <person name="Kollman J.M."/>
            <person name="Pandi L."/>
            <person name="Sawaya M.R."/>
            <person name="Riley M."/>
            <person name="Doolittle R.F."/>
        </authorList>
    </citation>
    <scope>X-RAY CRYSTALLOGRAPHY (2.90 ANGSTROMS) OF 31-491 IN COMPLEX WITH CALCIUM</scope>
    <scope>DISULFIDE BONDS</scope>
    <scope>GLYCOSYLATION AT ASN-394</scope>
    <scope>SUBUNIT</scope>
    <scope>SUBCELLULAR LOCATION</scope>
    <scope>TISSUE SPECIFICITY</scope>
    <scope>COILED COIL DOMAIN</scope>
</reference>
<reference key="31">
    <citation type="journal article" date="1988" name="Thromb. Res.">
        <title>A polymorphism at B beta 448 of fibrinogen identified during structural studies of fibrinogen Baltimore II.</title>
        <authorList>
            <person name="Schmelzer C.H."/>
            <person name="Ebert R.F."/>
            <person name="Bell W.R."/>
        </authorList>
    </citation>
    <scope>VARIANT LYS-478</scope>
</reference>
<reference key="32">
    <citation type="journal article" date="1991" name="Blood">
        <title>A new congenital abnormal fibrinogen Ise characterized by the replacement of B beta glycine-15 by cysteine.</title>
        <authorList>
            <person name="Yoshida N."/>
            <person name="Wada H."/>
            <person name="Morita K."/>
            <person name="Hirata H."/>
            <person name="Matsuda M."/>
            <person name="Yamazumi K."/>
            <person name="Asakura S."/>
            <person name="Shirakawa S."/>
        </authorList>
    </citation>
    <scope>VARIANT ARG-45</scope>
</reference>
<reference key="33">
    <citation type="journal article" date="1992" name="J. Clin. Invest.">
        <title>Molecular basis of fibrinogen Naples associated with defective thrombin binding and thrombophilia. Homozygous substitution of B beta 68 Ala--&gt;Thr.</title>
        <authorList>
            <person name="Koopman J."/>
            <person name="Haverkate F."/>
            <person name="Lord S.T."/>
            <person name="Grimbergen J."/>
            <person name="Mannucci P.M."/>
        </authorList>
    </citation>
    <scope>INVOLVEMENT IN DYSFIBRIN</scope>
    <scope>VARIANT DYSFIBRIN THR-98</scope>
</reference>
<reference key="34">
    <citation type="journal article" date="1992" name="Proc. Natl. Acad. Sci. U.S.A.">
        <title>Abnormal fibrinogens IJmuiden (B beta Arg14--&gt;Cys) and Nijmegen (B beta Arg44--&gt;Cys) form disulfide-linked fibrinogen-albumin complexes.</title>
        <authorList>
            <person name="Koopman J."/>
            <person name="Haverkate F."/>
            <person name="Grimbergen J."/>
            <person name="Engesser L."/>
            <person name="Novakova I."/>
            <person name="Kerst A.F.J.A."/>
            <person name="Lord S.T."/>
        </authorList>
    </citation>
    <scope>VARIANTS CYS-44 AND CYS-74</scope>
</reference>
<reference key="35">
    <citation type="journal article" date="1985" name="J. Biol. Chem.">
        <title>Characterization of fibrinogen New York 1. A dysfunctional fibrinogen with a deletion of B beta(9-72) corresponding exactly to exon 2 of the gene.</title>
        <authorList>
            <person name="Liu C.Y."/>
            <person name="Koehn J.A."/>
            <person name="Morgan F.J."/>
        </authorList>
    </citation>
    <scope>VARIANT 39-GLY--LEU-102 DEL</scope>
</reference>
<reference key="36">
    <citation type="journal article" date="1999" name="Nat. Genet.">
        <title>Characterization of single-nucleotide polymorphisms in coding regions of human genes.</title>
        <authorList>
            <person name="Cargill M."/>
            <person name="Altshuler D."/>
            <person name="Ireland J."/>
            <person name="Sklar P."/>
            <person name="Ardlie K."/>
            <person name="Patil N."/>
            <person name="Shaw N."/>
            <person name="Lane C.R."/>
            <person name="Lim E.P."/>
            <person name="Kalyanaraman N."/>
            <person name="Nemesh J."/>
            <person name="Ziaugra L."/>
            <person name="Friedland L."/>
            <person name="Rolfe A."/>
            <person name="Warrington J."/>
            <person name="Lipshutz R."/>
            <person name="Daley G.Q."/>
            <person name="Lander E.S."/>
        </authorList>
    </citation>
    <scope>VARIANTS GLU-2; LEU-265 AND LYS-478</scope>
</reference>
<reference key="37">
    <citation type="journal article" date="1999" name="Nat. Genet.">
        <authorList>
            <person name="Cargill M."/>
            <person name="Altshuler D."/>
            <person name="Ireland J."/>
            <person name="Sklar P."/>
            <person name="Ardlie K."/>
            <person name="Patil N."/>
            <person name="Shaw N."/>
            <person name="Lane C.R."/>
            <person name="Lim E.P."/>
            <person name="Kalyanaraman N."/>
            <person name="Nemesh J."/>
            <person name="Ziaugra L."/>
            <person name="Friedland L."/>
            <person name="Rolfe A."/>
            <person name="Warrington J."/>
            <person name="Lipshutz R."/>
            <person name="Daley G.Q."/>
            <person name="Lander E.S."/>
        </authorList>
    </citation>
    <scope>ERRATUM OF PUBMED:10391209</scope>
</reference>
<reference key="38">
    <citation type="journal article" date="2000" name="Blood">
        <title>Missense mutations in the human beta fibrinogen gene cause congenital afibrinogenemia by impairing fibrinogen secretion.</title>
        <authorList>
            <person name="Duga S."/>
            <person name="Asselta R."/>
            <person name="Santagostino E."/>
            <person name="Zeinali S."/>
            <person name="Simonic T."/>
            <person name="Malcovati M."/>
            <person name="Mannucci P.M."/>
            <person name="Tenchini M.L."/>
        </authorList>
    </citation>
    <scope>VARIANTS CAFBN ARG-383 AND ASP-430</scope>
</reference>
<reference key="39">
    <citation type="journal article" date="2001" name="Blood">
        <title>The impaired polymerization of fibrinogen Longmont (Bbeta166Arg--&gt;Cys) is not improved by removal of disulfide-linked dimers from a mixture of dimers and cysteine-linked monomers.</title>
        <authorList>
            <person name="Lounes K.C."/>
            <person name="Lefkowitz J.B."/>
            <person name="Henschen-Edman A.H."/>
            <person name="Coates A.I."/>
            <person name="Hantgan R.R."/>
            <person name="Lord S.T."/>
        </authorList>
    </citation>
    <scope>VARIANT CAFBN CYS-196</scope>
</reference>
<reference key="40">
    <citation type="journal article" date="2004" name="Blood">
        <title>Missense or splicing mutation? The case of a fibrinogen Bbeta-chain mutation causing severe hypofibrinogenemia.</title>
        <authorList>
            <person name="Asselta R."/>
            <person name="Duga S."/>
            <person name="Spena S."/>
            <person name="Peyvandi F."/>
            <person name="Castaman G."/>
            <person name="Malcovati M."/>
            <person name="Mannucci P.M."/>
            <person name="Tenchini M.L."/>
        </authorList>
    </citation>
    <scope>VARIANT CAFBN GLN-202</scope>
</reference>
<reference key="41">
    <citation type="journal article" date="2015" name="Thromb. Haemost.">
        <title>Clinical and molecular characterisation of 21 patients affected by quantitative fibrinogen deficiency.</title>
        <authorList>
            <person name="Asselta R."/>
            <person name="Plate M."/>
            <person name="Robusto M."/>
            <person name="Borhany M."/>
            <person name="Guella I."/>
            <person name="Solda G."/>
            <person name="Afrasiabi A."/>
            <person name="Menegatti M."/>
            <person name="Shamsi T."/>
            <person name="Peyvandi F."/>
            <person name="Duga S."/>
        </authorList>
    </citation>
    <scope>VARIANTS CAFBN ARG-95 AND LYS-407</scope>
    <scope>CHARACTERIZATION OF VARIANTS CAFBN ARG-95 AND LYS-407</scope>
</reference>
<comment type="function">
    <text evidence="1">Cleaved by the protease thrombin to yield monomers which, together with fibrinogen alpha (FGA) and fibrinogen gamma (FGG), polymerize to form an insoluble fibrin matrix. Fibrin has a major function in hemostasis as one of the primary components of blood clots. In addition, functions during the early stages of wound repair to stabilize the lesion and guide cell migration during re-epithelialization. Was originally thought to be essential for platelet aggregation, based on in vitro studies using anticoagulated blood. However subsequent studies have shown that it is not absolutely required for thrombus formation in vivo. Enhances expression of SELP in activated platelets. Maternal fibrinogen is essential for successful pregnancy. Fibrin deposition is also associated with infection, where it protects against IFNG-mediated hemorrhage. May also facilitate the antibacterial immune response via both innate and T-cell mediated pathways.</text>
</comment>
<comment type="subunit">
    <text evidence="4 15 22 24">Heterohexamer; disulfide linked. Contains 2 sets of 3 non-identical chains (alpha, beta and gamma). The 2 heterotrimers are in head to head conformation with the N-termini in a small central domain.</text>
</comment>
<comment type="interaction">
    <interactant intactId="EBI-1034445">
        <id>P02675</id>
    </interactant>
    <interactant intactId="EBI-6377335">
        <id>PRO_0000037566</id>
        <dbReference type="UniProtKB" id="P27958"/>
    </interactant>
    <organismsDiffer>true</organismsDiffer>
    <experiments>4</experiments>
</comment>
<comment type="subcellular location">
    <subcellularLocation>
        <location evidence="4 15 24">Secreted</location>
    </subcellularLocation>
</comment>
<comment type="tissue specificity">
    <text evidence="4 15 24">Detected in blood plasma (at protein level).</text>
</comment>
<comment type="domain">
    <text evidence="4 15 24">A long coiled coil structure formed by 3 polypeptide chains connects the central nodule to the C-terminal domains (distal nodules). The long C-terminal ends of the alpha chains fold back, contributing a fourth strand to the coiled coil structure.</text>
</comment>
<comment type="PTM">
    <text evidence="17">Conversion of fibrinogen to fibrin is triggered by thrombin, which cleaves fibrinopeptides A and B from alpha and beta chains, and thus exposes the N-terminal polymerization sites responsible for the formation of the soft clot. The soft clot is converted into the hard clot by factor XIIIA which catalyzes the epsilon-(gamma-glutamyl)lysine cross-linking between gamma chains (stronger) and between alpha chains (weaker) of different monomers.</text>
</comment>
<comment type="disease" evidence="6 7 9 18">
    <disease id="DI-01387">
        <name>Congenital afibrinogenemia</name>
        <acronym>CAFBN</acronym>
        <description>Rare autosomal recessive disorder is characterized by bleeding that varies from mild to severe and by complete absence or extremely low levels of plasma and platelet fibrinogen.</description>
        <dbReference type="MIM" id="202400"/>
    </disease>
    <text>The disease is caused by variants affecting the gene represented in this entry. Patients with congenital fibrinogen abnormalities can manifest different clinical pictures. Some cases are clinically silent, some show a tendency toward bleeding and some show a predisposition for thrombosis with or without bleeding.</text>
</comment>
<comment type="disease" evidence="13">
    <disease id="DI-04218">
        <name>Dysfibrinogenemia, congenital</name>
        <acronym>DYSFIBRIN</acronym>
        <description>A disorder characterized by qualitative abnormalities (dysfibrinogenemia) of the circulating fibrinogen. Affected individuals are frequently asymptomatic, but some patients have bleeding diathesis, thromboembolic complications, or both. In some cases, dysfibrinogenemia is associated with low circulating fibrinogen levels (hypodysfibrinogenemia).</description>
        <dbReference type="MIM" id="616004"/>
    </disease>
    <text>The disease is caused by variants affecting the gene represented in this entry.</text>
</comment>
<comment type="sequence caution" evidence="28">
    <conflict type="miscellaneous discrepancy">
        <sequence resource="EMBL-CDS" id="AAH07030"/>
    </conflict>
    <text>Contaminating sequence. Potential poly-A sequence.</text>
</comment>
<comment type="online information" name="Wikipedia">
    <link uri="https://en.wikipedia.org/wiki/Fibrinogen"/>
    <text>Fibrinogen entry</text>
</comment>